<name>HIS4_LEPBL</name>
<reference key="1">
    <citation type="journal article" date="2006" name="Proc. Natl. Acad. Sci. U.S.A.">
        <title>Genome reduction in Leptospira borgpetersenii reflects limited transmission potential.</title>
        <authorList>
            <person name="Bulach D.M."/>
            <person name="Zuerner R.L."/>
            <person name="Wilson P."/>
            <person name="Seemann T."/>
            <person name="McGrath A."/>
            <person name="Cullen P.A."/>
            <person name="Davis J."/>
            <person name="Johnson M."/>
            <person name="Kuczek E."/>
            <person name="Alt D.P."/>
            <person name="Peterson-Burch B."/>
            <person name="Coppel R.L."/>
            <person name="Rood J.I."/>
            <person name="Davies J.K."/>
            <person name="Adler B."/>
        </authorList>
    </citation>
    <scope>NUCLEOTIDE SEQUENCE [LARGE SCALE GENOMIC DNA]</scope>
    <source>
        <strain>L550</strain>
    </source>
</reference>
<feature type="chain" id="PRO_0000290487" description="1-(5-phosphoribosyl)-5-[(5-phosphoribosylamino)methylideneamino] imidazole-4-carboxamide isomerase">
    <location>
        <begin position="1"/>
        <end position="241"/>
    </location>
</feature>
<feature type="active site" description="Proton acceptor" evidence="1">
    <location>
        <position position="8"/>
    </location>
</feature>
<feature type="active site" description="Proton donor" evidence="1">
    <location>
        <position position="130"/>
    </location>
</feature>
<proteinExistence type="inferred from homology"/>
<gene>
    <name evidence="1" type="primary">hisA</name>
    <name type="ordered locus">LBL_0032</name>
</gene>
<comment type="catalytic activity">
    <reaction evidence="1">
        <text>1-(5-phospho-beta-D-ribosyl)-5-[(5-phospho-beta-D-ribosylamino)methylideneamino]imidazole-4-carboxamide = 5-[(5-phospho-1-deoxy-D-ribulos-1-ylimino)methylamino]-1-(5-phospho-beta-D-ribosyl)imidazole-4-carboxamide</text>
        <dbReference type="Rhea" id="RHEA:15469"/>
        <dbReference type="ChEBI" id="CHEBI:58435"/>
        <dbReference type="ChEBI" id="CHEBI:58525"/>
        <dbReference type="EC" id="5.3.1.16"/>
    </reaction>
</comment>
<comment type="pathway">
    <text evidence="1">Amino-acid biosynthesis; L-histidine biosynthesis; L-histidine from 5-phospho-alpha-D-ribose 1-diphosphate: step 4/9.</text>
</comment>
<comment type="subcellular location">
    <subcellularLocation>
        <location evidence="1">Cytoplasm</location>
    </subcellularLocation>
</comment>
<comment type="similarity">
    <text evidence="1">Belongs to the HisA/HisF family.</text>
</comment>
<keyword id="KW-0028">Amino-acid biosynthesis</keyword>
<keyword id="KW-0963">Cytoplasm</keyword>
<keyword id="KW-0368">Histidine biosynthesis</keyword>
<keyword id="KW-0413">Isomerase</keyword>
<accession>Q056S8</accession>
<organism>
    <name type="scientific">Leptospira borgpetersenii serovar Hardjo-bovis (strain L550)</name>
    <dbReference type="NCBI Taxonomy" id="355276"/>
    <lineage>
        <taxon>Bacteria</taxon>
        <taxon>Pseudomonadati</taxon>
        <taxon>Spirochaetota</taxon>
        <taxon>Spirochaetia</taxon>
        <taxon>Leptospirales</taxon>
        <taxon>Leptospiraceae</taxon>
        <taxon>Leptospira</taxon>
    </lineage>
</organism>
<sequence>MIIIPAIDLFDNCAVRLFKGNYKEKKIYSSEPWKLAEGFAKNGATLLHLVDLNGARNQLGINEDSILKIRKTTSLKVQLGGGIRDKEKLAYYDKIGIDRFILGTAAVTDPDLLKFALDNYEKERVVVAVDAIDGIVKIAGWEKDSGVRYRDLMDRLAKAGIEHIVFTDIAQDGTLAGPNLKAYQEILNSYPFQVIASGGISSLKDLMDLSSLKTKIPLYGVITGKALYEGKLDLAKAISSI</sequence>
<protein>
    <recommendedName>
        <fullName evidence="1">1-(5-phosphoribosyl)-5-[(5-phosphoribosylamino)methylideneamino] imidazole-4-carboxamide isomerase</fullName>
        <ecNumber evidence="1">5.3.1.16</ecNumber>
    </recommendedName>
    <alternativeName>
        <fullName evidence="1">Phosphoribosylformimino-5-aminoimidazole carboxamide ribotide isomerase</fullName>
    </alternativeName>
</protein>
<evidence type="ECO:0000255" key="1">
    <source>
        <dbReference type="HAMAP-Rule" id="MF_01014"/>
    </source>
</evidence>
<dbReference type="EC" id="5.3.1.16" evidence="1"/>
<dbReference type="EMBL" id="CP000348">
    <property type="protein sequence ID" value="ABJ77667.1"/>
    <property type="molecule type" value="Genomic_DNA"/>
</dbReference>
<dbReference type="RefSeq" id="WP_011669157.1">
    <property type="nucleotide sequence ID" value="NC_008508.1"/>
</dbReference>
<dbReference type="SMR" id="Q056S8"/>
<dbReference type="KEGG" id="lbl:LBL_0032"/>
<dbReference type="HOGENOM" id="CLU_048577_1_2_12"/>
<dbReference type="UniPathway" id="UPA00031">
    <property type="reaction ID" value="UER00009"/>
</dbReference>
<dbReference type="GO" id="GO:0005737">
    <property type="term" value="C:cytoplasm"/>
    <property type="evidence" value="ECO:0007669"/>
    <property type="project" value="UniProtKB-SubCell"/>
</dbReference>
<dbReference type="GO" id="GO:0003949">
    <property type="term" value="F:1-(5-phosphoribosyl)-5-[(5-phosphoribosylamino)methylideneamino]imidazole-4-carboxamide isomerase activity"/>
    <property type="evidence" value="ECO:0007669"/>
    <property type="project" value="UniProtKB-UniRule"/>
</dbReference>
<dbReference type="GO" id="GO:0000105">
    <property type="term" value="P:L-histidine biosynthetic process"/>
    <property type="evidence" value="ECO:0007669"/>
    <property type="project" value="UniProtKB-UniRule"/>
</dbReference>
<dbReference type="GO" id="GO:0000162">
    <property type="term" value="P:L-tryptophan biosynthetic process"/>
    <property type="evidence" value="ECO:0007669"/>
    <property type="project" value="TreeGrafter"/>
</dbReference>
<dbReference type="CDD" id="cd04732">
    <property type="entry name" value="HisA"/>
    <property type="match status" value="1"/>
</dbReference>
<dbReference type="FunFam" id="3.20.20.70:FF:000009">
    <property type="entry name" value="1-(5-phosphoribosyl)-5-[(5-phosphoribosylamino)methylideneamino] imidazole-4-carboxamide isomerase"/>
    <property type="match status" value="1"/>
</dbReference>
<dbReference type="Gene3D" id="3.20.20.70">
    <property type="entry name" value="Aldolase class I"/>
    <property type="match status" value="1"/>
</dbReference>
<dbReference type="HAMAP" id="MF_01014">
    <property type="entry name" value="HisA"/>
    <property type="match status" value="1"/>
</dbReference>
<dbReference type="InterPro" id="IPR013785">
    <property type="entry name" value="Aldolase_TIM"/>
</dbReference>
<dbReference type="InterPro" id="IPR006062">
    <property type="entry name" value="His_biosynth"/>
</dbReference>
<dbReference type="InterPro" id="IPR006063">
    <property type="entry name" value="HisA_bact_arch"/>
</dbReference>
<dbReference type="InterPro" id="IPR044524">
    <property type="entry name" value="Isoase_HisA-like"/>
</dbReference>
<dbReference type="InterPro" id="IPR023016">
    <property type="entry name" value="Isoase_HisA-like_bact"/>
</dbReference>
<dbReference type="InterPro" id="IPR011060">
    <property type="entry name" value="RibuloseP-bd_barrel"/>
</dbReference>
<dbReference type="NCBIfam" id="TIGR00007">
    <property type="entry name" value="1-(5-phosphoribosyl)-5-[(5-phosphoribosylamino)methylideneamino]imidazole-4-carboxamide isomerase"/>
    <property type="match status" value="1"/>
</dbReference>
<dbReference type="PANTHER" id="PTHR43090">
    <property type="entry name" value="1-(5-PHOSPHORIBOSYL)-5-[(5-PHOSPHORIBOSYLAMINO)METHYLIDENEAMINO] IMIDAZOLE-4-CARBOXAMIDE ISOMERASE"/>
    <property type="match status" value="1"/>
</dbReference>
<dbReference type="PANTHER" id="PTHR43090:SF2">
    <property type="entry name" value="1-(5-PHOSPHORIBOSYL)-5-[(5-PHOSPHORIBOSYLAMINO)METHYLIDENEAMINO] IMIDAZOLE-4-CARBOXAMIDE ISOMERASE"/>
    <property type="match status" value="1"/>
</dbReference>
<dbReference type="Pfam" id="PF00977">
    <property type="entry name" value="His_biosynth"/>
    <property type="match status" value="1"/>
</dbReference>
<dbReference type="SUPFAM" id="SSF51366">
    <property type="entry name" value="Ribulose-phoshate binding barrel"/>
    <property type="match status" value="1"/>
</dbReference>